<accession>A8AHW5</accession>
<evidence type="ECO:0000255" key="1">
    <source>
        <dbReference type="HAMAP-Rule" id="MF_01889"/>
    </source>
</evidence>
<evidence type="ECO:0000256" key="2">
    <source>
        <dbReference type="SAM" id="MobiDB-lite"/>
    </source>
</evidence>
<sequence length="213" mass="22617">MMKMNRYALVAALAIFLSGCVGQREPAPVDEVKPAPEQPAEPQQPVPVVPSVPTIPQQPGPIEHEDQTAQPAPRVRHYDWNSAMQPMVGKMLQADGVTAGNVLLVDSVNNRTNGSLNAGEATETLRNALANNGKFTLVSAQQLAMAKQQLGLSPQDSLGTRSKAIGIARNVGAQYVLYSSAAGNVNAPSLQMQLMLVQTGEIIWSGKGAVQQQ</sequence>
<proteinExistence type="inferred from homology"/>
<dbReference type="EMBL" id="CP000822">
    <property type="protein sequence ID" value="ABV13078.1"/>
    <property type="molecule type" value="Genomic_DNA"/>
</dbReference>
<dbReference type="RefSeq" id="WP_012132815.1">
    <property type="nucleotide sequence ID" value="NC_009792.1"/>
</dbReference>
<dbReference type="SMR" id="A8AHW5"/>
<dbReference type="STRING" id="290338.CKO_01951"/>
<dbReference type="GeneID" id="45135928"/>
<dbReference type="KEGG" id="cko:CKO_01951"/>
<dbReference type="HOGENOM" id="CLU_092328_0_0_6"/>
<dbReference type="OrthoDB" id="6466283at2"/>
<dbReference type="Proteomes" id="UP000008148">
    <property type="component" value="Chromosome"/>
</dbReference>
<dbReference type="GO" id="GO:0031241">
    <property type="term" value="C:periplasmic side of cell outer membrane"/>
    <property type="evidence" value="ECO:0007669"/>
    <property type="project" value="UniProtKB-UniRule"/>
</dbReference>
<dbReference type="GO" id="GO:0030234">
    <property type="term" value="F:enzyme regulator activity"/>
    <property type="evidence" value="ECO:0007669"/>
    <property type="project" value="UniProtKB-UniRule"/>
</dbReference>
<dbReference type="GO" id="GO:0009252">
    <property type="term" value="P:peptidoglycan biosynthetic process"/>
    <property type="evidence" value="ECO:0007669"/>
    <property type="project" value="UniProtKB-UniRule"/>
</dbReference>
<dbReference type="GO" id="GO:0008360">
    <property type="term" value="P:regulation of cell shape"/>
    <property type="evidence" value="ECO:0007669"/>
    <property type="project" value="UniProtKB-KW"/>
</dbReference>
<dbReference type="FunFam" id="3.40.50.10610:FF:000002">
    <property type="entry name" value="Penicillin-binding protein activator LpoB"/>
    <property type="match status" value="1"/>
</dbReference>
<dbReference type="Gene3D" id="3.40.50.10610">
    <property type="entry name" value="ABC-type transport auxiliary lipoprotein component"/>
    <property type="match status" value="1"/>
</dbReference>
<dbReference type="HAMAP" id="MF_01889">
    <property type="entry name" value="LpoB"/>
    <property type="match status" value="1"/>
</dbReference>
<dbReference type="InterPro" id="IPR014094">
    <property type="entry name" value="LpoB"/>
</dbReference>
<dbReference type="NCBIfam" id="TIGR02722">
    <property type="entry name" value="lp"/>
    <property type="match status" value="1"/>
</dbReference>
<dbReference type="PANTHER" id="PTHR40593">
    <property type="entry name" value="PENICILLIN-BINDING PROTEIN ACTIVATOR LPOB"/>
    <property type="match status" value="1"/>
</dbReference>
<dbReference type="PANTHER" id="PTHR40593:SF1">
    <property type="entry name" value="PENICILLIN-BINDING PROTEIN ACTIVATOR LPOB"/>
    <property type="match status" value="1"/>
</dbReference>
<dbReference type="Pfam" id="PF13036">
    <property type="entry name" value="LpoB"/>
    <property type="match status" value="1"/>
</dbReference>
<dbReference type="PROSITE" id="PS51257">
    <property type="entry name" value="PROKAR_LIPOPROTEIN"/>
    <property type="match status" value="1"/>
</dbReference>
<organism>
    <name type="scientific">Citrobacter koseri (strain ATCC BAA-895 / CDC 4225-83 / SGSC4696)</name>
    <dbReference type="NCBI Taxonomy" id="290338"/>
    <lineage>
        <taxon>Bacteria</taxon>
        <taxon>Pseudomonadati</taxon>
        <taxon>Pseudomonadota</taxon>
        <taxon>Gammaproteobacteria</taxon>
        <taxon>Enterobacterales</taxon>
        <taxon>Enterobacteriaceae</taxon>
        <taxon>Citrobacter</taxon>
    </lineage>
</organism>
<gene>
    <name evidence="1" type="primary">lpoB</name>
    <name type="ordered locus">CKO_01951</name>
</gene>
<feature type="signal peptide" evidence="1">
    <location>
        <begin position="1"/>
        <end position="19"/>
    </location>
</feature>
<feature type="chain" id="PRO_0000405779" description="Penicillin-binding protein activator LpoB">
    <location>
        <begin position="20"/>
        <end position="213"/>
    </location>
</feature>
<feature type="region of interest" description="Disordered" evidence="2">
    <location>
        <begin position="26"/>
        <end position="71"/>
    </location>
</feature>
<feature type="compositionally biased region" description="Pro residues" evidence="2">
    <location>
        <begin position="36"/>
        <end position="50"/>
    </location>
</feature>
<feature type="lipid moiety-binding region" description="N-palmitoyl cysteine" evidence="1">
    <location>
        <position position="20"/>
    </location>
</feature>
<feature type="lipid moiety-binding region" description="S-diacylglycerol cysteine" evidence="1">
    <location>
        <position position="20"/>
    </location>
</feature>
<keyword id="KW-0998">Cell outer membrane</keyword>
<keyword id="KW-0133">Cell shape</keyword>
<keyword id="KW-0449">Lipoprotein</keyword>
<keyword id="KW-0472">Membrane</keyword>
<keyword id="KW-0564">Palmitate</keyword>
<keyword id="KW-0573">Peptidoglycan synthesis</keyword>
<keyword id="KW-1185">Reference proteome</keyword>
<keyword id="KW-0732">Signal</keyword>
<name>LPOB_CITK8</name>
<reference key="1">
    <citation type="submission" date="2007-08" db="EMBL/GenBank/DDBJ databases">
        <authorList>
            <consortium name="The Citrobacter koseri Genome Sequencing Project"/>
            <person name="McClelland M."/>
            <person name="Sanderson E.K."/>
            <person name="Porwollik S."/>
            <person name="Spieth J."/>
            <person name="Clifton W.S."/>
            <person name="Latreille P."/>
            <person name="Courtney L."/>
            <person name="Wang C."/>
            <person name="Pepin K."/>
            <person name="Bhonagiri V."/>
            <person name="Nash W."/>
            <person name="Johnson M."/>
            <person name="Thiruvilangam P."/>
            <person name="Wilson R."/>
        </authorList>
    </citation>
    <scope>NUCLEOTIDE SEQUENCE [LARGE SCALE GENOMIC DNA]</scope>
    <source>
        <strain>ATCC BAA-895 / CDC 4225-83 / SGSC4696</strain>
    </source>
</reference>
<protein>
    <recommendedName>
        <fullName evidence="1">Penicillin-binding protein activator LpoB</fullName>
        <shortName evidence="1">PBP activator LpoB</shortName>
    </recommendedName>
</protein>
<comment type="function">
    <text evidence="1">Regulator of peptidoglycan synthesis that is essential for the function of penicillin-binding protein 1B (PBP1b).</text>
</comment>
<comment type="subunit">
    <text evidence="1">Interacts with PBP1b.</text>
</comment>
<comment type="subcellular location">
    <subcellularLocation>
        <location evidence="1">Cell outer membrane</location>
        <topology evidence="1">Lipid-anchor</topology>
        <orientation evidence="1">Periplasmic side</orientation>
    </subcellularLocation>
</comment>
<comment type="similarity">
    <text evidence="1">Belongs to the LpoB family.</text>
</comment>